<keyword id="KW-1185">Reference proteome</keyword>
<keyword id="KW-0687">Ribonucleoprotein</keyword>
<keyword id="KW-0689">Ribosomal protein</keyword>
<organism>
    <name type="scientific">Zea mays</name>
    <name type="common">Maize</name>
    <dbReference type="NCBI Taxonomy" id="4577"/>
    <lineage>
        <taxon>Eukaryota</taxon>
        <taxon>Viridiplantae</taxon>
        <taxon>Streptophyta</taxon>
        <taxon>Embryophyta</taxon>
        <taxon>Tracheophyta</taxon>
        <taxon>Spermatophyta</taxon>
        <taxon>Magnoliopsida</taxon>
        <taxon>Liliopsida</taxon>
        <taxon>Poales</taxon>
        <taxon>Poaceae</taxon>
        <taxon>PACMAD clade</taxon>
        <taxon>Panicoideae</taxon>
        <taxon>Andropogonodae</taxon>
        <taxon>Andropogoneae</taxon>
        <taxon>Tripsacinae</taxon>
        <taxon>Zea</taxon>
    </lineage>
</organism>
<accession>O48557</accession>
<protein>
    <recommendedName>
        <fullName evidence="1">Large ribosomal subunit protein uL22</fullName>
    </recommendedName>
    <alternativeName>
        <fullName>60S ribosomal protein L17</fullName>
    </alternativeName>
</protein>
<name>RL17_MAIZE</name>
<gene>
    <name type="primary">RPL17</name>
</gene>
<feature type="chain" id="PRO_0000125340" description="Large ribosomal subunit protein uL22">
    <location>
        <begin position="1"/>
        <end position="171"/>
    </location>
</feature>
<proteinExistence type="evidence at transcript level"/>
<dbReference type="EMBL" id="AF034948">
    <property type="protein sequence ID" value="AAB88619.1"/>
    <property type="molecule type" value="mRNA"/>
</dbReference>
<dbReference type="PIR" id="T01410">
    <property type="entry name" value="T01410"/>
</dbReference>
<dbReference type="RefSeq" id="NP_001104890.1">
    <property type="nucleotide sequence ID" value="NM_001111420.1"/>
</dbReference>
<dbReference type="SMR" id="O48557"/>
<dbReference type="STRING" id="4577.O48557"/>
<dbReference type="PaxDb" id="4577-GRMZM2G702426_P01"/>
<dbReference type="EnsemblPlants" id="Zm00001eb175100_T002">
    <property type="protein sequence ID" value="Zm00001eb175100_P002"/>
    <property type="gene ID" value="Zm00001eb175100"/>
</dbReference>
<dbReference type="GeneID" id="541667"/>
<dbReference type="Gramene" id="Zm00001eb175100_T002">
    <property type="protein sequence ID" value="Zm00001eb175100_P002"/>
    <property type="gene ID" value="Zm00001eb175100"/>
</dbReference>
<dbReference type="KEGG" id="zma:541667"/>
<dbReference type="eggNOG" id="KOG3353">
    <property type="taxonomic scope" value="Eukaryota"/>
</dbReference>
<dbReference type="HOGENOM" id="CLU_083987_0_1_1"/>
<dbReference type="InParanoid" id="O48557"/>
<dbReference type="OMA" id="IKRMHIR"/>
<dbReference type="OrthoDB" id="10254664at2759"/>
<dbReference type="Proteomes" id="UP000007305">
    <property type="component" value="Chromosome 4"/>
</dbReference>
<dbReference type="ExpressionAtlas" id="O48557">
    <property type="expression patterns" value="baseline and differential"/>
</dbReference>
<dbReference type="GO" id="GO:0022625">
    <property type="term" value="C:cytosolic large ribosomal subunit"/>
    <property type="evidence" value="ECO:0000318"/>
    <property type="project" value="GO_Central"/>
</dbReference>
<dbReference type="GO" id="GO:0003735">
    <property type="term" value="F:structural constituent of ribosome"/>
    <property type="evidence" value="ECO:0000318"/>
    <property type="project" value="GO_Central"/>
</dbReference>
<dbReference type="GO" id="GO:0002181">
    <property type="term" value="P:cytoplasmic translation"/>
    <property type="evidence" value="ECO:0000318"/>
    <property type="project" value="GO_Central"/>
</dbReference>
<dbReference type="CDD" id="cd00336">
    <property type="entry name" value="Ribosomal_L22"/>
    <property type="match status" value="1"/>
</dbReference>
<dbReference type="FunFam" id="3.90.470.10:FF:000005">
    <property type="entry name" value="60S ribosomal protein L17"/>
    <property type="match status" value="1"/>
</dbReference>
<dbReference type="Gene3D" id="3.90.470.10">
    <property type="entry name" value="Ribosomal protein L22/L17"/>
    <property type="match status" value="1"/>
</dbReference>
<dbReference type="HAMAP" id="MF_01331_A">
    <property type="entry name" value="Ribosomal_uL22_A"/>
    <property type="match status" value="1"/>
</dbReference>
<dbReference type="InterPro" id="IPR001063">
    <property type="entry name" value="Ribosomal_uL22"/>
</dbReference>
<dbReference type="InterPro" id="IPR018260">
    <property type="entry name" value="Ribosomal_uL22_CS"/>
</dbReference>
<dbReference type="InterPro" id="IPR005721">
    <property type="entry name" value="Ribosomal_uL22_euk/arc"/>
</dbReference>
<dbReference type="InterPro" id="IPR036394">
    <property type="entry name" value="Ribosomal_uL22_sf"/>
</dbReference>
<dbReference type="NCBIfam" id="NF003260">
    <property type="entry name" value="PRK04223.1"/>
    <property type="match status" value="1"/>
</dbReference>
<dbReference type="NCBIfam" id="TIGR01038">
    <property type="entry name" value="uL22_arch_euk"/>
    <property type="match status" value="1"/>
</dbReference>
<dbReference type="PANTHER" id="PTHR11593">
    <property type="entry name" value="60S RIBOSOMAL PROTEIN L17"/>
    <property type="match status" value="1"/>
</dbReference>
<dbReference type="PANTHER" id="PTHR11593:SF43">
    <property type="entry name" value="LARGE RIBOSOMAL SUBUNIT PROTEIN UL22"/>
    <property type="match status" value="1"/>
</dbReference>
<dbReference type="Pfam" id="PF00237">
    <property type="entry name" value="Ribosomal_L22"/>
    <property type="match status" value="1"/>
</dbReference>
<dbReference type="SUPFAM" id="SSF54843">
    <property type="entry name" value="Ribosomal protein L22"/>
    <property type="match status" value="1"/>
</dbReference>
<dbReference type="PROSITE" id="PS00464">
    <property type="entry name" value="RIBOSOMAL_L22"/>
    <property type="match status" value="1"/>
</dbReference>
<comment type="similarity">
    <text evidence="1">Belongs to the universal ribosomal protein uL22 family.</text>
</comment>
<evidence type="ECO:0000305" key="1"/>
<sequence>MVKYSQEPGNPTKSAKAMGRDLRVHFKNTRETAFALRKLPLTKAKRYLEDVIAHKQAIPFRRYCGGVGRTAQAKSRHSNGQGRWPVKSARFILDLLKNAESNADVKGLDVDNLYVSHIQVNQAQKQRRRTYRAHGRINPYMSSPCHIELILSEKEEPVKKEADNIVAARKQ</sequence>
<reference key="1">
    <citation type="submission" date="1997-11" db="EMBL/GenBank/DDBJ databases">
        <authorList>
            <person name="Baysdorfer C."/>
        </authorList>
    </citation>
    <scope>NUCLEOTIDE SEQUENCE [MRNA]</scope>
    <source>
        <strain>cv. B73</strain>
    </source>
</reference>